<evidence type="ECO:0000269" key="1">
    <source>
    </source>
</evidence>
<evidence type="ECO:0000305" key="2"/>
<accession>P06440</accession>
<accession>Q76ZR0</accession>
<feature type="propeptide" id="PRO_0000040583" evidence="1">
    <location>
        <begin position="1"/>
        <end position="61"/>
    </location>
</feature>
<feature type="chain" id="PRO_0000040584" description="Major core protein OPG129">
    <location>
        <begin position="62"/>
        <end position="643"/>
    </location>
</feature>
<feature type="sequence conflict" description="In Ref. 3; AAA48303 and 2; AAO89401." evidence="2" ref="3 2">
    <original>Q</original>
    <variation>N</variation>
    <location>
        <position position="122"/>
    </location>
</feature>
<feature type="sequence conflict" description="In Ref. 2; AAO89401." evidence="2" ref="2">
    <original>I</original>
    <variation>R</variation>
    <location>
        <position position="317"/>
    </location>
</feature>
<feature type="sequence conflict" description="In Ref. 2; AAO89401." evidence="2" ref="2">
    <original>D</original>
    <variation>DP</variation>
    <location>
        <position position="545"/>
    </location>
</feature>
<reference key="1">
    <citation type="journal article" date="1985" name="J. Virol.">
        <title>Transcriptional and translational mapping and nucleotide sequence analysis of a vaccinia virus gene encoding the precursor of the major core polypeptide 4b.</title>
        <authorList>
            <person name="Rosel J."/>
            <person name="Moss B."/>
        </authorList>
    </citation>
    <scope>NUCLEOTIDE SEQUENCE [GENOMIC DNA]</scope>
</reference>
<reference key="2">
    <citation type="submission" date="2003-02" db="EMBL/GenBank/DDBJ databases">
        <title>Sequencing of the coding region of Vaccinia-WR to an average 9-fold redundancy and an error rate of 0.16/10kb.</title>
        <authorList>
            <person name="Esposito J.J."/>
            <person name="Frace A.M."/>
            <person name="Sammons S.A."/>
            <person name="Olsen-Rasmussen M."/>
            <person name="Osborne J."/>
            <person name="Wohlhueter R."/>
        </authorList>
    </citation>
    <scope>NUCLEOTIDE SEQUENCE [LARGE SCALE GENOMIC DNA]</scope>
</reference>
<reference key="3">
    <citation type="submission" date="1989-09" db="EMBL/GenBank/DDBJ databases">
        <authorList>
            <person name="van Meir E."/>
        </authorList>
    </citation>
    <scope>NUCLEOTIDE SEQUENCE [GENOMIC DNA] OF 1-201</scope>
</reference>
<reference key="4">
    <citation type="journal article" date="1991" name="J. Gen. Virol.">
        <title>Proteolytic maturation of vaccinia virus core proteins: identification of a conserved motif at the N termini of the 4b and 25K virion proteins.</title>
        <authorList>
            <person name="van Slyke J.K."/>
            <person name="Franke C.A."/>
            <person name="Hruby D.E."/>
        </authorList>
    </citation>
    <scope>PROTEIN SEQUENCE OF 62-70</scope>
</reference>
<proteinExistence type="evidence at protein level"/>
<organism>
    <name type="scientific">Vaccinia virus (strain Western Reserve)</name>
    <name type="common">VACV</name>
    <name type="synonym">Vaccinia virus (strain WR)</name>
    <dbReference type="NCBI Taxonomy" id="10254"/>
    <lineage>
        <taxon>Viruses</taxon>
        <taxon>Varidnaviria</taxon>
        <taxon>Bamfordvirae</taxon>
        <taxon>Nucleocytoviricota</taxon>
        <taxon>Pokkesviricetes</taxon>
        <taxon>Chitovirales</taxon>
        <taxon>Poxviridae</taxon>
        <taxon>Chordopoxvirinae</taxon>
        <taxon>Orthopoxvirus</taxon>
        <taxon>Vaccinia virus</taxon>
    </lineage>
</organism>
<keyword id="KW-0903">Direct protein sequencing</keyword>
<keyword id="KW-1185">Reference proteome</keyword>
<keyword id="KW-0946">Virion</keyword>
<protein>
    <recommendedName>
        <fullName>Major core protein OPG129</fullName>
    </recommendedName>
    <alternativeName>
        <fullName>Virion core protein 4b</fullName>
        <shortName>p4b</shortName>
    </alternativeName>
</protein>
<name>PG129_VACCW</name>
<organismHost>
    <name type="scientific">Bos taurus</name>
    <name type="common">Bovine</name>
    <dbReference type="NCBI Taxonomy" id="9913"/>
</organismHost>
<sequence length="643" mass="72499">MEAVVNSDVFLTSNAGLKSSYTNQTLSLVDEDHIHTSDKSLSCSVCNSLSQIVDDDFISAGARNQRTKPKRAGNNQSQQPIKKDCMVSIDEVASTHDWSTRLRNDGNAIAKYLTTNKYDTSQFTIQDMLNIMNKLNIVRTNRNELFQLLTHVKSTLNNASVSVKCTHPLVLIHSRASPRIGDQLKELDKIYSPSNHHILLSTTRFQSMHFTDMSSSQDLSFIYRKPETNYYIHPILMALFGIKLPALENAYVHGDTYSLIQQLYEFRKVKSYNYMLLVNRLTEDNPIVITGVSDLISTEIQRANMHTMIRKAIMNIIMGIFYCNDDDAVDPHLMKIIHTGCSQVMTDEEQILASILSIVGFRPTLVSVARPINGISYDMKLQAAPYIVVNPMKMITTSDSPISINSKDIYSMAFDGNSGRVVFAPPNIGYGRCSGVTHIDPLGTNVMGSAVHSPVIVNGAMMFYVERRQNKNMFGGECYTGFRSLIDDTPIDVSPEIMLNGIMYRLKSAVCYKLGDQFFDCGSSDIFLKGHYTILFTENGPWMYDLSVFNPGARNARLMRALKNQYKKLSMDSDDGFYEWLNGDGSVFAASKQQMLMNHVANFDDDLLTMEEAMSMISRHCCILIYAQDYDQYISARHITELF</sequence>
<gene>
    <name type="primary">OPG129</name>
    <name type="ordered locus">VACWR122</name>
    <name type="ORF">A3L</name>
</gene>
<dbReference type="EMBL" id="M11079">
    <property type="protein sequence ID" value="AAA48298.1"/>
    <property type="molecule type" value="Genomic_DNA"/>
</dbReference>
<dbReference type="EMBL" id="AY243312">
    <property type="protein sequence ID" value="AAO89401.1"/>
    <property type="molecule type" value="Genomic_DNA"/>
</dbReference>
<dbReference type="EMBL" id="M27914">
    <property type="protein sequence ID" value="AAA48303.1"/>
    <property type="molecule type" value="Genomic_DNA"/>
</dbReference>
<dbReference type="PIR" id="A03871">
    <property type="entry name" value="FOVZZW"/>
</dbReference>
<dbReference type="IntAct" id="P06440">
    <property type="interactions" value="1"/>
</dbReference>
<dbReference type="MINT" id="P06440"/>
<dbReference type="KEGG" id="vg:3707520"/>
<dbReference type="Proteomes" id="UP000000344">
    <property type="component" value="Genome"/>
</dbReference>
<dbReference type="GO" id="GO:0044423">
    <property type="term" value="C:virion component"/>
    <property type="evidence" value="ECO:0007669"/>
    <property type="project" value="UniProtKB-KW"/>
</dbReference>
<dbReference type="InterPro" id="IPR004972">
    <property type="entry name" value="P4B"/>
</dbReference>
<dbReference type="Pfam" id="PF03292">
    <property type="entry name" value="Pox_P4B"/>
    <property type="match status" value="1"/>
</dbReference>
<comment type="function">
    <text>Major component of the virion core that undergoes proteolytic processing during the immature virion (IV) to mature virion (MV) transition. Essential for the formation of a structurally normal core.</text>
</comment>
<comment type="subcellular location">
    <subcellularLocation>
        <location evidence="2">Virion</location>
    </subcellularLocation>
    <text>Localizes to the virion core wall, the mature protein accounts for 11% of the dry mass of the virion.</text>
</comment>
<comment type="PTM">
    <text>The 73-kDa precursor is cleaved to a mature protein of 60 kDa during virion maturation. Proteolytic cleavage of major core proteins OPG129, OPG136, and OPG098, which occurs at a late stage of core formation, is required for production of infectious mature virions (MV).</text>
</comment>
<comment type="similarity">
    <text evidence="2">Belongs to the orthopoxvirus OPG129 family.</text>
</comment>